<evidence type="ECO:0000250" key="1">
    <source>
        <dbReference type="UniProtKB" id="P0DQL1"/>
    </source>
</evidence>
<evidence type="ECO:0000269" key="2">
    <source>
    </source>
</evidence>
<evidence type="ECO:0000303" key="3">
    <source>
    </source>
</evidence>
<evidence type="ECO:0000305" key="4"/>
<evidence type="ECO:0000305" key="5">
    <source>
    </source>
</evidence>
<organism>
    <name type="scientific">Leptodactylus laticeps</name>
    <name type="common">Santa Fe frog</name>
    <dbReference type="NCBI Taxonomy" id="1615745"/>
    <lineage>
        <taxon>Eukaryota</taxon>
        <taxon>Metazoa</taxon>
        <taxon>Chordata</taxon>
        <taxon>Craniata</taxon>
        <taxon>Vertebrata</taxon>
        <taxon>Euteleostomi</taxon>
        <taxon>Amphibia</taxon>
        <taxon>Batrachia</taxon>
        <taxon>Anura</taxon>
        <taxon>Neobatrachia</taxon>
        <taxon>Hyloidea</taxon>
        <taxon>Leptodactylidae</taxon>
        <taxon>Leptodactylinae</taxon>
        <taxon>Leptodactylus</taxon>
    </lineage>
</organism>
<feature type="peptide" id="PRO_0000449665" description="Ocellatin-L1" evidence="2">
    <location>
        <begin position="1"/>
        <end position="25"/>
    </location>
</feature>
<feature type="modified residue" description="Leucine amide" evidence="2">
    <location>
        <position position="25"/>
    </location>
</feature>
<name>OCE1_LEPLD</name>
<keyword id="KW-0027">Amidation</keyword>
<keyword id="KW-0878">Amphibian defense peptide</keyword>
<keyword id="KW-0044">Antibiotic</keyword>
<keyword id="KW-0929">Antimicrobial</keyword>
<keyword id="KW-0391">Immunity</keyword>
<keyword id="KW-0399">Innate immunity</keyword>
<keyword id="KW-0964">Secreted</keyword>
<dbReference type="SMR" id="P0DQL0"/>
<dbReference type="GO" id="GO:0005576">
    <property type="term" value="C:extracellular region"/>
    <property type="evidence" value="ECO:0007669"/>
    <property type="project" value="UniProtKB-SubCell"/>
</dbReference>
<dbReference type="GO" id="GO:0042742">
    <property type="term" value="P:defense response to bacterium"/>
    <property type="evidence" value="ECO:0007669"/>
    <property type="project" value="UniProtKB-KW"/>
</dbReference>
<dbReference type="GO" id="GO:0045087">
    <property type="term" value="P:innate immune response"/>
    <property type="evidence" value="ECO:0007669"/>
    <property type="project" value="UniProtKB-KW"/>
</dbReference>
<dbReference type="GO" id="GO:0019836">
    <property type="term" value="P:symbiont-mediated hemolysis of host erythrocyte"/>
    <property type="evidence" value="ECO:0007669"/>
    <property type="project" value="InterPro"/>
</dbReference>
<dbReference type="InterPro" id="IPR012518">
    <property type="entry name" value="Antimicrobial15"/>
</dbReference>
<dbReference type="Pfam" id="PF08110">
    <property type="entry name" value="Antimicrobial15"/>
    <property type="match status" value="1"/>
</dbReference>
<protein>
    <recommendedName>
        <fullName evidence="3">Ocellatin-L1</fullName>
    </recommendedName>
</protein>
<sequence>GVVDILKGAAKDLAGHLATKVMNKL</sequence>
<comment type="function">
    <text evidence="1 2">Antimicrobial peptide with activity against Gram-negative bacteria but without activity against Gram-positive bacteria (PubMed:16712520). Shows a low activity in stimulating insulin release from rat BRIN-BD11 beta cells, and acts without loss of integrity of the plasma membrane (By similarity). Has very low hemolytic activity (PubMed:16712520). Shows weak amphipathicity in its alpha-helical conformation (PubMed:16712520).</text>
</comment>
<comment type="subcellular location">
    <subcellularLocation>
        <location evidence="2">Secreted</location>
    </subcellularLocation>
</comment>
<comment type="tissue specificity">
    <text evidence="5">Expressed by the skin glands.</text>
</comment>
<comment type="similarity">
    <text evidence="4">Belongs to the frog skin active peptide (FSAP) family. Ocellatin subfamily.</text>
</comment>
<comment type="caution">
    <text evidence="4">Ocellatin-L1 may be Ocellatin-L2 without a Asn-23 deamination. Since both peptides do not have the same antibacterial activity, they are kept in two separate entries.</text>
</comment>
<comment type="online information" name="The antimicrobial peptide database">
    <link uri="https://wangapd3.com/database/query_output.php?ID=01409"/>
</comment>
<reference key="1">
    <citation type="journal article" date="2006" name="Protein Pept. Lett.">
        <title>Purification and properties of laticeptin, an antimicrobial peptide from skin secretions of the South American frog Leptodactylus laticeps.</title>
        <authorList>
            <person name="Conlon J.M."/>
            <person name="Al-Ghaferi N."/>
            <person name="Abraham B."/>
            <person name="Sonnevend A."/>
            <person name="King J.D."/>
            <person name="Nielsen P.F."/>
        </authorList>
    </citation>
    <scope>FUNCTION</scope>
    <scope>SUBCELLULAR LOCATION</scope>
    <scope>AMIDATION AT LEU-25</scope>
</reference>
<reference key="2">
    <citation type="journal article" date="2009" name="Peptides">
        <title>A glycine-leucine-rich peptide structurally related to the plasticins from skin secretions of the frog Leptodactylus laticeps (Leptodactylidae).</title>
        <authorList>
            <person name="Conlon J.M."/>
            <person name="Abdel-Wahab Y.H."/>
            <person name="Flatt P.R."/>
            <person name="Leprince J."/>
            <person name="Vaudry H."/>
            <person name="Jouenne T."/>
            <person name="Condamine E."/>
        </authorList>
    </citation>
    <scope>NOMENCLATURE</scope>
</reference>
<proteinExistence type="evidence at protein level"/>
<accession>P0DQL0</accession>